<proteinExistence type="inferred from homology"/>
<name>FRDD_ECOL6</name>
<feature type="chain" id="PRO_0000196544" description="Fumarate reductase subunit D">
    <location>
        <begin position="1"/>
        <end position="119"/>
    </location>
</feature>
<feature type="transmembrane region" description="Helical" evidence="1">
    <location>
        <begin position="26"/>
        <end position="46"/>
    </location>
</feature>
<feature type="transmembrane region" description="Helical" evidence="1">
    <location>
        <begin position="55"/>
        <end position="75"/>
    </location>
</feature>
<feature type="transmembrane region" description="Helical" evidence="1">
    <location>
        <begin position="99"/>
        <end position="119"/>
    </location>
</feature>
<gene>
    <name evidence="1" type="primary">frdD</name>
    <name type="ordered locus">c5239</name>
</gene>
<comment type="function">
    <text evidence="1">Two distinct, membrane-bound, FAD-containing enzymes are responsible for the catalysis of fumarate and succinate interconversion; fumarate reductase is used in anaerobic growth, and succinate dehydrogenase is used in aerobic growth. Anchors the catalytic components of the fumarate reductase complex to the cell inner membrane, binds quinones.</text>
</comment>
<comment type="subunit">
    <text evidence="1">Part of an enzyme complex containing four subunits: a flavoprotein (FrdA), an iron-sulfur protein (FrdB), and two hydrophobic anchor proteins (FrdC and FrdD).</text>
</comment>
<comment type="subcellular location">
    <subcellularLocation>
        <location evidence="1">Cell inner membrane</location>
        <topology evidence="1">Multi-pass membrane protein</topology>
    </subcellularLocation>
</comment>
<comment type="similarity">
    <text evidence="1">Belongs to the FrdD family.</text>
</comment>
<organism>
    <name type="scientific">Escherichia coli O6:H1 (strain CFT073 / ATCC 700928 / UPEC)</name>
    <dbReference type="NCBI Taxonomy" id="199310"/>
    <lineage>
        <taxon>Bacteria</taxon>
        <taxon>Pseudomonadati</taxon>
        <taxon>Pseudomonadota</taxon>
        <taxon>Gammaproteobacteria</taxon>
        <taxon>Enterobacterales</taxon>
        <taxon>Enterobacteriaceae</taxon>
        <taxon>Escherichia</taxon>
    </lineage>
</organism>
<reference key="1">
    <citation type="journal article" date="2002" name="Proc. Natl. Acad. Sci. U.S.A.">
        <title>Extensive mosaic structure revealed by the complete genome sequence of uropathogenic Escherichia coli.</title>
        <authorList>
            <person name="Welch R.A."/>
            <person name="Burland V."/>
            <person name="Plunkett G. III"/>
            <person name="Redford P."/>
            <person name="Roesch P."/>
            <person name="Rasko D."/>
            <person name="Buckles E.L."/>
            <person name="Liou S.-R."/>
            <person name="Boutin A."/>
            <person name="Hackett J."/>
            <person name="Stroud D."/>
            <person name="Mayhew G.F."/>
            <person name="Rose D.J."/>
            <person name="Zhou S."/>
            <person name="Schwartz D.C."/>
            <person name="Perna N.T."/>
            <person name="Mobley H.L.T."/>
            <person name="Donnenberg M.S."/>
            <person name="Blattner F.R."/>
        </authorList>
    </citation>
    <scope>NUCLEOTIDE SEQUENCE [LARGE SCALE GENOMIC DNA]</scope>
    <source>
        <strain>CFT073 / ATCC 700928 / UPEC</strain>
    </source>
</reference>
<protein>
    <recommendedName>
        <fullName evidence="1">Fumarate reductase subunit D</fullName>
    </recommendedName>
    <alternativeName>
        <fullName evidence="1">Fumarate reductase 13 kDa hydrophobic protein</fullName>
    </alternativeName>
    <alternativeName>
        <fullName evidence="1">Quinol-fumarate reductase subunit D</fullName>
        <shortName evidence="1">QFR subunit D</shortName>
    </alternativeName>
</protein>
<evidence type="ECO:0000255" key="1">
    <source>
        <dbReference type="HAMAP-Rule" id="MF_00709"/>
    </source>
</evidence>
<dbReference type="EMBL" id="AE014075">
    <property type="protein sequence ID" value="AAN83661.1"/>
    <property type="molecule type" value="Genomic_DNA"/>
</dbReference>
<dbReference type="RefSeq" id="WP_024182261.1">
    <property type="nucleotide sequence ID" value="NC_004431.1"/>
</dbReference>
<dbReference type="SMR" id="Q8FAL7"/>
<dbReference type="STRING" id="199310.c5239"/>
<dbReference type="KEGG" id="ecc:c5239"/>
<dbReference type="eggNOG" id="COG3080">
    <property type="taxonomic scope" value="Bacteria"/>
</dbReference>
<dbReference type="HOGENOM" id="CLU_168367_0_0_6"/>
<dbReference type="Proteomes" id="UP000001410">
    <property type="component" value="Chromosome"/>
</dbReference>
<dbReference type="GO" id="GO:0045283">
    <property type="term" value="C:fumarate reductase complex"/>
    <property type="evidence" value="ECO:0007669"/>
    <property type="project" value="UniProtKB-UniRule"/>
</dbReference>
<dbReference type="GO" id="GO:0005886">
    <property type="term" value="C:plasma membrane"/>
    <property type="evidence" value="ECO:0007669"/>
    <property type="project" value="UniProtKB-SubCell"/>
</dbReference>
<dbReference type="GO" id="GO:0000104">
    <property type="term" value="F:succinate dehydrogenase activity"/>
    <property type="evidence" value="ECO:0007669"/>
    <property type="project" value="UniProtKB-UniRule"/>
</dbReference>
<dbReference type="GO" id="GO:0006106">
    <property type="term" value="P:fumarate metabolic process"/>
    <property type="evidence" value="ECO:0007669"/>
    <property type="project" value="InterPro"/>
</dbReference>
<dbReference type="CDD" id="cd00547">
    <property type="entry name" value="QFR_TypeD_subunitD"/>
    <property type="match status" value="1"/>
</dbReference>
<dbReference type="FunFam" id="1.20.1300.10:FF:000002">
    <property type="entry name" value="Fumarate reductase subunit D"/>
    <property type="match status" value="1"/>
</dbReference>
<dbReference type="Gene3D" id="1.20.1300.10">
    <property type="entry name" value="Fumarate reductase/succinate dehydrogenase, transmembrane subunit"/>
    <property type="match status" value="1"/>
</dbReference>
<dbReference type="HAMAP" id="MF_00709">
    <property type="entry name" value="Fumarate_red_D"/>
    <property type="match status" value="1"/>
</dbReference>
<dbReference type="InterPro" id="IPR003418">
    <property type="entry name" value="Fumarate_red_D"/>
</dbReference>
<dbReference type="InterPro" id="IPR034804">
    <property type="entry name" value="SQR/QFR_C/D"/>
</dbReference>
<dbReference type="NCBIfam" id="NF003977">
    <property type="entry name" value="PRK05470.1-1"/>
    <property type="match status" value="1"/>
</dbReference>
<dbReference type="Pfam" id="PF02313">
    <property type="entry name" value="Fumarate_red_D"/>
    <property type="match status" value="1"/>
</dbReference>
<dbReference type="PIRSF" id="PIRSF000179">
    <property type="entry name" value="FrdD"/>
    <property type="match status" value="1"/>
</dbReference>
<dbReference type="SUPFAM" id="SSF81343">
    <property type="entry name" value="Fumarate reductase respiratory complex transmembrane subunits"/>
    <property type="match status" value="1"/>
</dbReference>
<keyword id="KW-0997">Cell inner membrane</keyword>
<keyword id="KW-1003">Cell membrane</keyword>
<keyword id="KW-0472">Membrane</keyword>
<keyword id="KW-1185">Reference proteome</keyword>
<keyword id="KW-0812">Transmembrane</keyword>
<keyword id="KW-1133">Transmembrane helix</keyword>
<accession>Q8FAL7</accession>
<sequence length="119" mass="13107">MINPNPKRSDEPVFWGLFGAGGMWSAIIAPVMILLVGILLPIGLFPGDALSYERVLAFAQSFIGRVFLFLMIVLPLWCGLHRMHHAMHDLKIHVPAGKWVFYGLAAILTVVTLIGVVTI</sequence>